<accession>Q5HBV6</accession>
<accession>Q5FD24</accession>
<protein>
    <recommendedName>
        <fullName evidence="1">Large ribosomal subunit protein bL33</fullName>
    </recommendedName>
    <alternativeName>
        <fullName evidence="2">50S ribosomal protein L33</fullName>
    </alternativeName>
</protein>
<proteinExistence type="inferred from homology"/>
<organism>
    <name type="scientific">Ehrlichia ruminantium (strain Welgevonden)</name>
    <dbReference type="NCBI Taxonomy" id="254945"/>
    <lineage>
        <taxon>Bacteria</taxon>
        <taxon>Pseudomonadati</taxon>
        <taxon>Pseudomonadota</taxon>
        <taxon>Alphaproteobacteria</taxon>
        <taxon>Rickettsiales</taxon>
        <taxon>Anaplasmataceae</taxon>
        <taxon>Ehrlichia</taxon>
    </lineage>
</organism>
<gene>
    <name evidence="1" type="primary">rpmG</name>
    <name type="ordered locus">Erum2190</name>
    <name type="ordered locus">ERWE_CDS_02210</name>
</gene>
<keyword id="KW-0687">Ribonucleoprotein</keyword>
<keyword id="KW-0689">Ribosomal protein</keyword>
<evidence type="ECO:0000255" key="1">
    <source>
        <dbReference type="HAMAP-Rule" id="MF_00294"/>
    </source>
</evidence>
<evidence type="ECO:0000305" key="2"/>
<comment type="similarity">
    <text evidence="1">Belongs to the bacterial ribosomal protein bL33 family.</text>
</comment>
<comment type="sequence caution" evidence="2">
    <conflict type="erroneous initiation">
        <sequence resource="EMBL-CDS" id="CAI26715"/>
    </conflict>
</comment>
<sequence length="56" mass="6485">MAKRGSTLLVKLASSAGTGYFYVKKRNPKKLINKLSFRKYDPVARKHVLFTEEKLR</sequence>
<dbReference type="EMBL" id="CR767821">
    <property type="protein sequence ID" value="CAH57937.1"/>
    <property type="molecule type" value="Genomic_DNA"/>
</dbReference>
<dbReference type="EMBL" id="CR925678">
    <property type="protein sequence ID" value="CAI26715.1"/>
    <property type="status" value="ALT_INIT"/>
    <property type="molecule type" value="Genomic_DNA"/>
</dbReference>
<dbReference type="RefSeq" id="WP_011154905.1">
    <property type="nucleotide sequence ID" value="NC_005295.2"/>
</dbReference>
<dbReference type="SMR" id="Q5HBV6"/>
<dbReference type="GeneID" id="33058363"/>
<dbReference type="KEGG" id="eru:Erum2190"/>
<dbReference type="KEGG" id="erw:ERWE_CDS_02210"/>
<dbReference type="eggNOG" id="COG0267">
    <property type="taxonomic scope" value="Bacteria"/>
</dbReference>
<dbReference type="HOGENOM" id="CLU_190949_1_0_5"/>
<dbReference type="Proteomes" id="UP000001021">
    <property type="component" value="Chromosome"/>
</dbReference>
<dbReference type="GO" id="GO:0005737">
    <property type="term" value="C:cytoplasm"/>
    <property type="evidence" value="ECO:0007669"/>
    <property type="project" value="UniProtKB-ARBA"/>
</dbReference>
<dbReference type="GO" id="GO:0015934">
    <property type="term" value="C:large ribosomal subunit"/>
    <property type="evidence" value="ECO:0007669"/>
    <property type="project" value="TreeGrafter"/>
</dbReference>
<dbReference type="GO" id="GO:0003735">
    <property type="term" value="F:structural constituent of ribosome"/>
    <property type="evidence" value="ECO:0007669"/>
    <property type="project" value="InterPro"/>
</dbReference>
<dbReference type="GO" id="GO:0006412">
    <property type="term" value="P:translation"/>
    <property type="evidence" value="ECO:0007669"/>
    <property type="project" value="UniProtKB-UniRule"/>
</dbReference>
<dbReference type="Gene3D" id="2.20.28.120">
    <property type="entry name" value="Ribosomal protein L33"/>
    <property type="match status" value="1"/>
</dbReference>
<dbReference type="HAMAP" id="MF_00294">
    <property type="entry name" value="Ribosomal_bL33"/>
    <property type="match status" value="1"/>
</dbReference>
<dbReference type="InterPro" id="IPR001705">
    <property type="entry name" value="Ribosomal_bL33"/>
</dbReference>
<dbReference type="InterPro" id="IPR038584">
    <property type="entry name" value="Ribosomal_bL33_sf"/>
</dbReference>
<dbReference type="InterPro" id="IPR011332">
    <property type="entry name" value="Ribosomal_zn-bd"/>
</dbReference>
<dbReference type="NCBIfam" id="NF001860">
    <property type="entry name" value="PRK00595.1"/>
    <property type="match status" value="1"/>
</dbReference>
<dbReference type="NCBIfam" id="TIGR01023">
    <property type="entry name" value="rpmG_bact"/>
    <property type="match status" value="1"/>
</dbReference>
<dbReference type="PANTHER" id="PTHR15238">
    <property type="entry name" value="54S RIBOSOMAL PROTEIN L39, MITOCHONDRIAL"/>
    <property type="match status" value="1"/>
</dbReference>
<dbReference type="PANTHER" id="PTHR15238:SF1">
    <property type="entry name" value="LARGE RIBOSOMAL SUBUNIT PROTEIN BL33M"/>
    <property type="match status" value="1"/>
</dbReference>
<dbReference type="Pfam" id="PF00471">
    <property type="entry name" value="Ribosomal_L33"/>
    <property type="match status" value="1"/>
</dbReference>
<dbReference type="SUPFAM" id="SSF57829">
    <property type="entry name" value="Zn-binding ribosomal proteins"/>
    <property type="match status" value="1"/>
</dbReference>
<feature type="chain" id="PRO_0000356455" description="Large ribosomal subunit protein bL33">
    <location>
        <begin position="1"/>
        <end position="56"/>
    </location>
</feature>
<reference key="1">
    <citation type="journal article" date="2005" name="Proc. Natl. Acad. Sci. U.S.A.">
        <title>The genome of the heartwater agent Ehrlichia ruminantium contains multiple tandem repeats of actively variable copy number.</title>
        <authorList>
            <person name="Collins N.E."/>
            <person name="Liebenberg J."/>
            <person name="de Villiers E.P."/>
            <person name="Brayton K.A."/>
            <person name="Louw E."/>
            <person name="Pretorius A."/>
            <person name="Faber F.E."/>
            <person name="van Heerden H."/>
            <person name="Josemans A."/>
            <person name="van Kleef M."/>
            <person name="Steyn H.C."/>
            <person name="van Strijp M.F."/>
            <person name="Zweygarth E."/>
            <person name="Jongejan F."/>
            <person name="Maillard J.C."/>
            <person name="Berthier D."/>
            <person name="Botha M."/>
            <person name="Joubert F."/>
            <person name="Corton C.H."/>
            <person name="Thomson N.R."/>
            <person name="Allsopp M.T."/>
            <person name="Allsopp B.A."/>
        </authorList>
    </citation>
    <scope>NUCLEOTIDE SEQUENCE [LARGE SCALE GENOMIC DNA]</scope>
    <source>
        <strain>Welgevonden</strain>
    </source>
</reference>
<reference key="2">
    <citation type="journal article" date="2006" name="J. Bacteriol.">
        <title>Comparative genomic analysis of three strains of Ehrlichia ruminantium reveals an active process of genome size plasticity.</title>
        <authorList>
            <person name="Frutos R."/>
            <person name="Viari A."/>
            <person name="Ferraz C."/>
            <person name="Morgat A."/>
            <person name="Eychenie S."/>
            <person name="Kandassamy Y."/>
            <person name="Chantal I."/>
            <person name="Bensaid A."/>
            <person name="Coissac E."/>
            <person name="Vachiery N."/>
            <person name="Demaille J."/>
            <person name="Martinez D."/>
        </authorList>
    </citation>
    <scope>NUCLEOTIDE SEQUENCE [LARGE SCALE GENOMIC DNA]</scope>
    <source>
        <strain>Welgevonden</strain>
    </source>
</reference>
<name>RL33_EHRRW</name>